<keyword id="KW-1185">Reference proteome</keyword>
<name>Y350_METKA</name>
<protein>
    <recommendedName>
        <fullName evidence="1">UPF0248 protein MK0350</fullName>
    </recommendedName>
</protein>
<organism>
    <name type="scientific">Methanopyrus kandleri (strain AV19 / DSM 6324 / JCM 9639 / NBRC 100938)</name>
    <dbReference type="NCBI Taxonomy" id="190192"/>
    <lineage>
        <taxon>Archaea</taxon>
        <taxon>Methanobacteriati</taxon>
        <taxon>Methanobacteriota</taxon>
        <taxon>Methanomada group</taxon>
        <taxon>Methanopyri</taxon>
        <taxon>Methanopyrales</taxon>
        <taxon>Methanopyraceae</taxon>
        <taxon>Methanopyrus</taxon>
    </lineage>
</organism>
<sequence>MLHDPNDDPSEYVIYVIDRGSSSGLRRIWGDEIQDVKRGFLVLWNAEIPVHRVIRVERGGRVIWERGRRARGRR</sequence>
<proteinExistence type="inferred from homology"/>
<comment type="similarity">
    <text evidence="1">Belongs to the UPF0248 family.</text>
</comment>
<dbReference type="EMBL" id="AE009439">
    <property type="protein sequence ID" value="AAM01565.1"/>
    <property type="molecule type" value="Genomic_DNA"/>
</dbReference>
<dbReference type="STRING" id="190192.MK0350"/>
<dbReference type="PaxDb" id="190192-MK0350"/>
<dbReference type="EnsemblBacteria" id="AAM01565">
    <property type="protein sequence ID" value="AAM01565"/>
    <property type="gene ID" value="MK0350"/>
</dbReference>
<dbReference type="KEGG" id="mka:MK0350"/>
<dbReference type="HOGENOM" id="CLU_172276_3_1_2"/>
<dbReference type="InParanoid" id="Q8TYF0"/>
<dbReference type="Proteomes" id="UP000001826">
    <property type="component" value="Chromosome"/>
</dbReference>
<dbReference type="HAMAP" id="MF_01245">
    <property type="entry name" value="UPF0248"/>
    <property type="match status" value="1"/>
</dbReference>
<dbReference type="InterPro" id="IPR040459">
    <property type="entry name" value="MJ1316"/>
</dbReference>
<dbReference type="InterPro" id="IPR007547">
    <property type="entry name" value="UPF0248"/>
</dbReference>
<dbReference type="Pfam" id="PF04457">
    <property type="entry name" value="MJ1316"/>
    <property type="match status" value="1"/>
</dbReference>
<accession>Q8TYF0</accession>
<gene>
    <name type="ordered locus">MK0350</name>
</gene>
<feature type="chain" id="PRO_0000053414" description="UPF0248 protein MK0350">
    <location>
        <begin position="1"/>
        <end position="74"/>
    </location>
</feature>
<evidence type="ECO:0000255" key="1">
    <source>
        <dbReference type="HAMAP-Rule" id="MF_01245"/>
    </source>
</evidence>
<reference key="1">
    <citation type="journal article" date="2002" name="Proc. Natl. Acad. Sci. U.S.A.">
        <title>The complete genome of hyperthermophile Methanopyrus kandleri AV19 and monophyly of archaeal methanogens.</title>
        <authorList>
            <person name="Slesarev A.I."/>
            <person name="Mezhevaya K.V."/>
            <person name="Makarova K.S."/>
            <person name="Polushin N.N."/>
            <person name="Shcherbinina O.V."/>
            <person name="Shakhova V.V."/>
            <person name="Belova G.I."/>
            <person name="Aravind L."/>
            <person name="Natale D.A."/>
            <person name="Rogozin I.B."/>
            <person name="Tatusov R.L."/>
            <person name="Wolf Y.I."/>
            <person name="Stetter K.O."/>
            <person name="Malykh A.G."/>
            <person name="Koonin E.V."/>
            <person name="Kozyavkin S.A."/>
        </authorList>
    </citation>
    <scope>NUCLEOTIDE SEQUENCE [LARGE SCALE GENOMIC DNA]</scope>
    <source>
        <strain>AV19 / DSM 6324 / JCM 9639 / NBRC 100938</strain>
    </source>
</reference>